<keyword id="KW-0963">Cytoplasm</keyword>
<keyword id="KW-0269">Exonuclease</keyword>
<keyword id="KW-0378">Hydrolase</keyword>
<keyword id="KW-0540">Nuclease</keyword>
<name>EX7S_HAEI8</name>
<reference key="1">
    <citation type="journal article" date="2005" name="J. Bacteriol.">
        <title>Genomic sequence of an otitis media isolate of nontypeable Haemophilus influenzae: comparative study with H. influenzae serotype d, strain KW20.</title>
        <authorList>
            <person name="Harrison A."/>
            <person name="Dyer D.W."/>
            <person name="Gillaspy A."/>
            <person name="Ray W.C."/>
            <person name="Mungur R."/>
            <person name="Carson M.B."/>
            <person name="Zhong H."/>
            <person name="Gipson J."/>
            <person name="Gipson M."/>
            <person name="Johnson L.S."/>
            <person name="Lewis L."/>
            <person name="Bakaletz L.O."/>
            <person name="Munson R.S. Jr."/>
        </authorList>
    </citation>
    <scope>NUCLEOTIDE SEQUENCE [LARGE SCALE GENOMIC DNA]</scope>
    <source>
        <strain>86-028NP</strain>
    </source>
</reference>
<gene>
    <name evidence="1" type="primary">xseB</name>
    <name type="ordered locus">NTHI1693</name>
</gene>
<dbReference type="EC" id="3.1.11.6" evidence="1"/>
<dbReference type="EMBL" id="CP000057">
    <property type="protein sequence ID" value="AAX88483.1"/>
    <property type="molecule type" value="Genomic_DNA"/>
</dbReference>
<dbReference type="RefSeq" id="WP_005656614.1">
    <property type="nucleotide sequence ID" value="NC_007146.2"/>
</dbReference>
<dbReference type="SMR" id="Q4QKG4"/>
<dbReference type="GeneID" id="93220417"/>
<dbReference type="KEGG" id="hit:NTHI1693"/>
<dbReference type="HOGENOM" id="CLU_145918_3_3_6"/>
<dbReference type="Proteomes" id="UP000002525">
    <property type="component" value="Chromosome"/>
</dbReference>
<dbReference type="GO" id="GO:0005829">
    <property type="term" value="C:cytosol"/>
    <property type="evidence" value="ECO:0007669"/>
    <property type="project" value="TreeGrafter"/>
</dbReference>
<dbReference type="GO" id="GO:0009318">
    <property type="term" value="C:exodeoxyribonuclease VII complex"/>
    <property type="evidence" value="ECO:0007669"/>
    <property type="project" value="InterPro"/>
</dbReference>
<dbReference type="GO" id="GO:0008855">
    <property type="term" value="F:exodeoxyribonuclease VII activity"/>
    <property type="evidence" value="ECO:0007669"/>
    <property type="project" value="UniProtKB-UniRule"/>
</dbReference>
<dbReference type="GO" id="GO:0006308">
    <property type="term" value="P:DNA catabolic process"/>
    <property type="evidence" value="ECO:0007669"/>
    <property type="project" value="UniProtKB-UniRule"/>
</dbReference>
<dbReference type="FunFam" id="1.10.287.1040:FF:000001">
    <property type="entry name" value="Exodeoxyribonuclease 7 small subunit"/>
    <property type="match status" value="1"/>
</dbReference>
<dbReference type="Gene3D" id="1.10.287.1040">
    <property type="entry name" value="Exonuclease VII, small subunit"/>
    <property type="match status" value="1"/>
</dbReference>
<dbReference type="HAMAP" id="MF_00337">
    <property type="entry name" value="Exonuc_7_S"/>
    <property type="match status" value="1"/>
</dbReference>
<dbReference type="InterPro" id="IPR003761">
    <property type="entry name" value="Exonuc_VII_S"/>
</dbReference>
<dbReference type="InterPro" id="IPR037004">
    <property type="entry name" value="Exonuc_VII_ssu_sf"/>
</dbReference>
<dbReference type="NCBIfam" id="NF002137">
    <property type="entry name" value="PRK00977.1-1"/>
    <property type="match status" value="1"/>
</dbReference>
<dbReference type="NCBIfam" id="NF002140">
    <property type="entry name" value="PRK00977.1-4"/>
    <property type="match status" value="1"/>
</dbReference>
<dbReference type="NCBIfam" id="TIGR01280">
    <property type="entry name" value="xseB"/>
    <property type="match status" value="1"/>
</dbReference>
<dbReference type="PANTHER" id="PTHR34137">
    <property type="entry name" value="EXODEOXYRIBONUCLEASE 7 SMALL SUBUNIT"/>
    <property type="match status" value="1"/>
</dbReference>
<dbReference type="PANTHER" id="PTHR34137:SF1">
    <property type="entry name" value="EXODEOXYRIBONUCLEASE 7 SMALL SUBUNIT"/>
    <property type="match status" value="1"/>
</dbReference>
<dbReference type="Pfam" id="PF02609">
    <property type="entry name" value="Exonuc_VII_S"/>
    <property type="match status" value="1"/>
</dbReference>
<dbReference type="SUPFAM" id="SSF116842">
    <property type="entry name" value="XseB-like"/>
    <property type="match status" value="1"/>
</dbReference>
<organism>
    <name type="scientific">Haemophilus influenzae (strain 86-028NP)</name>
    <dbReference type="NCBI Taxonomy" id="281310"/>
    <lineage>
        <taxon>Bacteria</taxon>
        <taxon>Pseudomonadati</taxon>
        <taxon>Pseudomonadota</taxon>
        <taxon>Gammaproteobacteria</taxon>
        <taxon>Pasteurellales</taxon>
        <taxon>Pasteurellaceae</taxon>
        <taxon>Haemophilus</taxon>
    </lineage>
</organism>
<comment type="function">
    <text evidence="1">Bidirectionally degrades single-stranded DNA into large acid-insoluble oligonucleotides, which are then degraded further into small acid-soluble oligonucleotides.</text>
</comment>
<comment type="catalytic activity">
    <reaction evidence="1">
        <text>Exonucleolytic cleavage in either 5'- to 3'- or 3'- to 5'-direction to yield nucleoside 5'-phosphates.</text>
        <dbReference type="EC" id="3.1.11.6"/>
    </reaction>
</comment>
<comment type="subunit">
    <text evidence="1">Heterooligomer composed of large and small subunits.</text>
</comment>
<comment type="subcellular location">
    <subcellularLocation>
        <location evidence="1">Cytoplasm</location>
    </subcellularLocation>
</comment>
<comment type="similarity">
    <text evidence="1">Belongs to the XseB family.</text>
</comment>
<feature type="chain" id="PRO_0000303711" description="Exodeoxyribonuclease 7 small subunit">
    <location>
        <begin position="1"/>
        <end position="84"/>
    </location>
</feature>
<proteinExistence type="inferred from homology"/>
<evidence type="ECO:0000255" key="1">
    <source>
        <dbReference type="HAMAP-Rule" id="MF_00337"/>
    </source>
</evidence>
<accession>Q4QKG4</accession>
<sequence length="84" mass="9483">MARKPASSQDFETTLAQLENIVTHLENGDLPLEEALKEFEQGVQLAKLGQERLQQAEQRIQILLQKTEDAPLNDYKGNDYEGNA</sequence>
<protein>
    <recommendedName>
        <fullName evidence="1">Exodeoxyribonuclease 7 small subunit</fullName>
        <ecNumber evidence="1">3.1.11.6</ecNumber>
    </recommendedName>
    <alternativeName>
        <fullName evidence="1">Exodeoxyribonuclease VII small subunit</fullName>
        <shortName evidence="1">Exonuclease VII small subunit</shortName>
    </alternativeName>
</protein>